<name>UFOG3_MAIZE</name>
<comment type="function">
    <text>In the presence of other necessary color factors, this glycosylation reaction allows the accumulation of anthocyanin pigments.</text>
</comment>
<comment type="catalytic activity">
    <reaction>
        <text>an anthocyanidin + UDP-alpha-D-glucose + H(+) = an anthocyanidin 3-O-beta-D-glucoside + UDP</text>
        <dbReference type="Rhea" id="RHEA:20093"/>
        <dbReference type="ChEBI" id="CHEBI:15378"/>
        <dbReference type="ChEBI" id="CHEBI:16307"/>
        <dbReference type="ChEBI" id="CHEBI:58223"/>
        <dbReference type="ChEBI" id="CHEBI:58885"/>
        <dbReference type="ChEBI" id="CHEBI:143576"/>
        <dbReference type="EC" id="2.4.1.115"/>
    </reaction>
</comment>
<comment type="pathway">
    <text>Pigment biosynthesis; anthocyanin biosynthesis.</text>
</comment>
<comment type="similarity">
    <text evidence="3">Belongs to the UDP-glycosyltransferase family.</text>
</comment>
<proteinExistence type="inferred from homology"/>
<accession>P16167</accession>
<sequence>MAPADGESSPPPHVAVVAFPFSSHAAVLLSIARALAAAAAPSGATLSFLSTASSLAQLRKASSASAGHGLPGNLRFVEVPDGAPAAEESVPVPRQMQLFMEAAEAGGVKAWLEAARAAAGGARVTCVVGDAFVWPAADAAASAGAPWVPVWTAASCALLAHIRTDALREDVGDQAANRVDEPLISHPGLASYRVRDLPDGVVSGDFNYVINLLVHRMGQCLPRSAAAVALNTFPGLDPPDVTAALAEILPNCVPFGPYHLLLAEDDADTAAPADPHGCLAWLGRQPARGVAYVSFGTVACPRPDELRELAAGLEASGAPFLWSLREDSWTLLPPGFLDRAAGTGSGLVVPWAPQVAVLRHPSVGAFVTHAGWASVLEGVSSGVPMACRPFFGDQRMNARSVAHVWGFGAAFEGAMTSAGVAAAVEELLRGEEGARMRARAKVLQALVAEAFGPGGECRKNFDRFVEIVCRA</sequence>
<dbReference type="EC" id="2.4.1.115"/>
<dbReference type="EMBL" id="X13502">
    <property type="protein sequence ID" value="CAA31857.1"/>
    <property type="molecule type" value="Genomic_DNA"/>
</dbReference>
<dbReference type="EMBL" id="X07937">
    <property type="protein sequence ID" value="CAA30760.1"/>
    <property type="molecule type" value="Genomic_DNA"/>
</dbReference>
<dbReference type="PIR" id="S01037">
    <property type="entry name" value="S01037"/>
</dbReference>
<dbReference type="SMR" id="P16167"/>
<dbReference type="FunCoup" id="P16167">
    <property type="interactions" value="898"/>
</dbReference>
<dbReference type="STRING" id="4577.P16167"/>
<dbReference type="CAZy" id="GT1">
    <property type="family name" value="Glycosyltransferase Family 1"/>
</dbReference>
<dbReference type="PaxDb" id="4577-GRMZM2G165390_P01"/>
<dbReference type="MaizeGDB" id="13885"/>
<dbReference type="InParanoid" id="P16167"/>
<dbReference type="UniPathway" id="UPA00009"/>
<dbReference type="Proteomes" id="UP000007305">
    <property type="component" value="Unplaced"/>
</dbReference>
<dbReference type="GO" id="GO:0047213">
    <property type="term" value="F:anthocyanidin 3-O-glucosyltransferase activity"/>
    <property type="evidence" value="ECO:0007669"/>
    <property type="project" value="UniProtKB-EC"/>
</dbReference>
<dbReference type="GO" id="GO:0009718">
    <property type="term" value="P:anthocyanin-containing compound biosynthetic process"/>
    <property type="evidence" value="ECO:0007669"/>
    <property type="project" value="UniProtKB-UniPathway"/>
</dbReference>
<dbReference type="CDD" id="cd03784">
    <property type="entry name" value="GT1_Gtf-like"/>
    <property type="match status" value="1"/>
</dbReference>
<dbReference type="FunFam" id="3.40.50.2000:FF:000091">
    <property type="entry name" value="Glycosyltransferase"/>
    <property type="match status" value="1"/>
</dbReference>
<dbReference type="FunFam" id="3.40.50.2000:FF:000225">
    <property type="entry name" value="Glycosyltransferase"/>
    <property type="match status" value="1"/>
</dbReference>
<dbReference type="Gene3D" id="3.40.50.2000">
    <property type="entry name" value="Glycogen Phosphorylase B"/>
    <property type="match status" value="2"/>
</dbReference>
<dbReference type="InterPro" id="IPR050481">
    <property type="entry name" value="UDP-glycosyltransf_plant"/>
</dbReference>
<dbReference type="InterPro" id="IPR002213">
    <property type="entry name" value="UDP_glucos_trans"/>
</dbReference>
<dbReference type="InterPro" id="IPR035595">
    <property type="entry name" value="UDP_glycos_trans_CS"/>
</dbReference>
<dbReference type="PANTHER" id="PTHR48049:SF65">
    <property type="entry name" value="ANTHOCYANIDIN 3-O-GLUCOSYLTRANSFERASE"/>
    <property type="match status" value="1"/>
</dbReference>
<dbReference type="PANTHER" id="PTHR48049">
    <property type="entry name" value="GLYCOSYLTRANSFERASE"/>
    <property type="match status" value="1"/>
</dbReference>
<dbReference type="Pfam" id="PF00201">
    <property type="entry name" value="UDPGT"/>
    <property type="match status" value="1"/>
</dbReference>
<dbReference type="SUPFAM" id="SSF53756">
    <property type="entry name" value="UDP-Glycosyltransferase/glycogen phosphorylase"/>
    <property type="match status" value="1"/>
</dbReference>
<dbReference type="PROSITE" id="PS00375">
    <property type="entry name" value="UDPGT"/>
    <property type="match status" value="1"/>
</dbReference>
<keyword id="KW-0328">Glycosyltransferase</keyword>
<keyword id="KW-1185">Reference proteome</keyword>
<keyword id="KW-0808">Transferase</keyword>
<reference key="1">
    <citation type="journal article" date="1988" name="Plant Mol. Biol.">
        <title>Sequence comparisons of 3 wild-type bronze-1 alleles from Zea mays.</title>
        <authorList>
            <person name="Furtek D."/>
            <person name="Schiefelbein J.W."/>
            <person name="Johnston F."/>
            <person name="Nelson O.E. Jr."/>
        </authorList>
        <dbReference type="AGRICOLA" id="IND92000025"/>
    </citation>
    <scope>NUCLEOTIDE SEQUENCE [GENOMIC DNA]</scope>
</reference>
<reference key="2">
    <citation type="journal article" date="1988" name="Genetics">
        <title>Sequence of three bronze alleles of maize and correlation with the genetic fine structure.</title>
        <authorList>
            <person name="Ralston E.J."/>
            <person name="English J.J."/>
            <person name="Dooner H.K."/>
        </authorList>
    </citation>
    <scope>NUCLEOTIDE SEQUENCE [GENOMIC DNA]</scope>
</reference>
<evidence type="ECO:0000250" key="1">
    <source>
        <dbReference type="UniProtKB" id="A0A0A1HA03"/>
    </source>
</evidence>
<evidence type="ECO:0000250" key="2">
    <source>
        <dbReference type="UniProtKB" id="P51094"/>
    </source>
</evidence>
<evidence type="ECO:0000305" key="3"/>
<feature type="chain" id="PRO_0000074140" description="Anthocyanidin 3-O-glucosyltransferase">
    <location>
        <begin position="1"/>
        <end position="471"/>
    </location>
</feature>
<feature type="active site" description="Proton acceptor" evidence="1">
    <location>
        <position position="24"/>
    </location>
</feature>
<feature type="active site" description="Charge relay" evidence="1">
    <location>
        <position position="130"/>
    </location>
</feature>
<feature type="binding site" evidence="2">
    <location>
        <position position="24"/>
    </location>
    <ligand>
        <name>an anthocyanidin</name>
        <dbReference type="ChEBI" id="CHEBI:143576"/>
    </ligand>
</feature>
<feature type="binding site" evidence="1">
    <location>
        <position position="152"/>
    </location>
    <ligand>
        <name>UDP-alpha-D-glucose</name>
        <dbReference type="ChEBI" id="CHEBI:58885"/>
    </ligand>
</feature>
<feature type="binding site" evidence="2">
    <location>
        <position position="161"/>
    </location>
    <ligand>
        <name>an anthocyanidin</name>
        <dbReference type="ChEBI" id="CHEBI:143576"/>
    </ligand>
</feature>
<feature type="binding site" evidence="1">
    <location>
        <position position="352"/>
    </location>
    <ligand>
        <name>UDP-alpha-D-glucose</name>
        <dbReference type="ChEBI" id="CHEBI:58885"/>
    </ligand>
</feature>
<feature type="binding site" evidence="1">
    <location>
        <position position="354"/>
    </location>
    <ligand>
        <name>UDP-alpha-D-glucose</name>
        <dbReference type="ChEBI" id="CHEBI:58885"/>
    </ligand>
</feature>
<feature type="binding site" evidence="1">
    <location>
        <position position="369"/>
    </location>
    <ligand>
        <name>UDP-alpha-D-glucose</name>
        <dbReference type="ChEBI" id="CHEBI:58885"/>
    </ligand>
</feature>
<feature type="binding site" evidence="1">
    <location>
        <position position="372"/>
    </location>
    <ligand>
        <name>UDP-alpha-D-glucose</name>
        <dbReference type="ChEBI" id="CHEBI:58885"/>
    </ligand>
</feature>
<feature type="binding site" evidence="1">
    <location>
        <position position="374"/>
    </location>
    <ligand>
        <name>UDP-alpha-D-glucose</name>
        <dbReference type="ChEBI" id="CHEBI:58885"/>
    </ligand>
</feature>
<feature type="binding site" evidence="1">
    <location>
        <position position="377"/>
    </location>
    <ligand>
        <name>UDP-alpha-D-glucose</name>
        <dbReference type="ChEBI" id="CHEBI:58885"/>
    </ligand>
</feature>
<feature type="binding site" evidence="2">
    <location>
        <position position="392"/>
    </location>
    <ligand>
        <name>an anthocyanidin</name>
        <dbReference type="ChEBI" id="CHEBI:143576"/>
    </ligand>
</feature>
<feature type="binding site" evidence="1">
    <location>
        <position position="393"/>
    </location>
    <ligand>
        <name>UDP-alpha-D-glucose</name>
        <dbReference type="ChEBI" id="CHEBI:58885"/>
    </ligand>
</feature>
<feature type="binding site" evidence="1">
    <location>
        <position position="394"/>
    </location>
    <ligand>
        <name>UDP-alpha-D-glucose</name>
        <dbReference type="ChEBI" id="CHEBI:58885"/>
    </ligand>
</feature>
<protein>
    <recommendedName>
        <fullName>Anthocyanidin 3-O-glucosyltransferase</fullName>
        <ecNumber>2.4.1.115</ecNumber>
    </recommendedName>
    <alternativeName>
        <fullName>Bronze-1</fullName>
    </alternativeName>
    <alternativeName>
        <fullName>Bz-W22 allele</fullName>
    </alternativeName>
    <alternativeName>
        <fullName>Flavonol 3-O-glucosyltransferase</fullName>
    </alternativeName>
    <alternativeName>
        <fullName>UDP-glucose flavonoid 3-O-glucosyltransferase</fullName>
    </alternativeName>
</protein>
<organism>
    <name type="scientific">Zea mays</name>
    <name type="common">Maize</name>
    <dbReference type="NCBI Taxonomy" id="4577"/>
    <lineage>
        <taxon>Eukaryota</taxon>
        <taxon>Viridiplantae</taxon>
        <taxon>Streptophyta</taxon>
        <taxon>Embryophyta</taxon>
        <taxon>Tracheophyta</taxon>
        <taxon>Spermatophyta</taxon>
        <taxon>Magnoliopsida</taxon>
        <taxon>Liliopsida</taxon>
        <taxon>Poales</taxon>
        <taxon>Poaceae</taxon>
        <taxon>PACMAD clade</taxon>
        <taxon>Panicoideae</taxon>
        <taxon>Andropogonodae</taxon>
        <taxon>Andropogoneae</taxon>
        <taxon>Tripsacinae</taxon>
        <taxon>Zea</taxon>
    </lineage>
</organism>
<gene>
    <name type="primary">BZ1</name>
    <name type="synonym">UGT71A1</name>
</gene>